<geneLocation type="plasmid">
    <name>pSR1</name>
</geneLocation>
<reference key="1">
    <citation type="journal article" date="1985" name="J. Mol. Biol.">
        <title>Molecular and functional organization of yeast plasmid pSR1.</title>
        <authorList>
            <person name="Araki H."/>
            <person name="Jearnpipatkul A."/>
            <person name="Tatsumi H."/>
            <person name="Sakurai T."/>
            <person name="Ushio T.S.H."/>
            <person name="Muta T."/>
            <person name="Oshima Y."/>
        </authorList>
    </citation>
    <scope>NUCLEOTIDE SEQUENCE [GENOMIC DNA]</scope>
</reference>
<keyword id="KW-0229">DNA integration</keyword>
<keyword id="KW-0233">DNA recombination</keyword>
<keyword id="KW-0614">Plasmid</keyword>
<organism>
    <name type="scientific">Zygosaccharomyces rouxii</name>
    <dbReference type="NCBI Taxonomy" id="4956"/>
    <lineage>
        <taxon>Eukaryota</taxon>
        <taxon>Fungi</taxon>
        <taxon>Dikarya</taxon>
        <taxon>Ascomycota</taxon>
        <taxon>Saccharomycotina</taxon>
        <taxon>Saccharomycetes</taxon>
        <taxon>Saccharomycetales</taxon>
        <taxon>Saccharomycetaceae</taxon>
        <taxon>Zygosaccharomyces</taxon>
    </lineage>
</organism>
<proteinExistence type="inferred from homology"/>
<accession>P13785</accession>
<protein>
    <recommendedName>
        <fullName>Recombinase Flp protein</fullName>
    </recommendedName>
</protein>
<gene>
    <name type="primary">R</name>
</gene>
<evidence type="ECO:0000255" key="1">
    <source>
        <dbReference type="PROSITE-ProRule" id="PRU01247"/>
    </source>
</evidence>
<evidence type="ECO:0000305" key="2"/>
<comment type="function">
    <text>Catalyzes the recombination between the large inverted repetitions of the plasmid.</text>
</comment>
<comment type="similarity">
    <text evidence="2">Belongs to the 'phage' integrase family.</text>
</comment>
<sequence length="490" mass="55755">MQLTKDTEISTINRQMSDFSELSQILPLHQISKIKDILENENPLPKEKLASHLTMIILMANLASQKRKDVPVKRSTFLKYQRSISKTLQYDSSTKTVSFEYHLKDPSKLIKGLEDVVSPYRFVVGVHEKPDDVMSHLSAVHMRKEAGRKRDLGNKINDEITKIAETQETIWGFVGKTMDLIEARTTRPTTKAAYNLLLQATFMNCCRADDLKNTDIKTFEVIPDKHLGRMLRAFVPETKTGTRFVYFFPCKGRCDPLLALDSYLQWTDPIPKTRTTDEDARYDYQLLRNSLLGSYDGFISKQSDESIFKIPNGPKAHLGRHVTASYLSNNEMDKEATLYGNWSAAREEGVSRVAKARYMHTIEKSPPSYLFAFLSGFYNITAERACELVDPNSNPCEQDKNIPMISDIETLMARYGKNAEIIPMDVLVFLSSYARFKNNEGKEYKLQARSSRGVPDFPDNGRTALYNALTAAHVKRRKISIVVGRSIDTS</sequence>
<dbReference type="EMBL" id="X02398">
    <property type="protein sequence ID" value="CAA26245.1"/>
    <property type="molecule type" value="Genomic_DNA"/>
</dbReference>
<dbReference type="PIR" id="S28355">
    <property type="entry name" value="S28355"/>
</dbReference>
<dbReference type="SMR" id="P13785"/>
<dbReference type="GO" id="GO:0003677">
    <property type="term" value="F:DNA binding"/>
    <property type="evidence" value="ECO:0007669"/>
    <property type="project" value="InterPro"/>
</dbReference>
<dbReference type="GO" id="GO:0015074">
    <property type="term" value="P:DNA integration"/>
    <property type="evidence" value="ECO:0007669"/>
    <property type="project" value="UniProtKB-KW"/>
</dbReference>
<dbReference type="GO" id="GO:0006310">
    <property type="term" value="P:DNA recombination"/>
    <property type="evidence" value="ECO:0007669"/>
    <property type="project" value="UniProtKB-KW"/>
</dbReference>
<dbReference type="CDD" id="cd00217">
    <property type="entry name" value="INT_Flp_C"/>
    <property type="match status" value="1"/>
</dbReference>
<dbReference type="Gene3D" id="1.10.443.10">
    <property type="entry name" value="Intergrase catalytic core"/>
    <property type="match status" value="1"/>
</dbReference>
<dbReference type="InterPro" id="IPR011010">
    <property type="entry name" value="DNA_brk_join_enz"/>
</dbReference>
<dbReference type="InterPro" id="IPR013762">
    <property type="entry name" value="Integrase-like_cat_sf"/>
</dbReference>
<dbReference type="InterPro" id="IPR005626">
    <property type="entry name" value="Recombinase_Flp_C"/>
</dbReference>
<dbReference type="InterPro" id="IPR022647">
    <property type="entry name" value="Recombinase_Flp_N"/>
</dbReference>
<dbReference type="Pfam" id="PF05202">
    <property type="entry name" value="Flp_C"/>
    <property type="match status" value="1"/>
</dbReference>
<dbReference type="Pfam" id="PF03930">
    <property type="entry name" value="Flp_N"/>
    <property type="match status" value="1"/>
</dbReference>
<dbReference type="SUPFAM" id="SSF56349">
    <property type="entry name" value="DNA breaking-rejoining enzymes"/>
    <property type="match status" value="1"/>
</dbReference>
<dbReference type="PROSITE" id="PS51899">
    <property type="entry name" value="TYR_RECOMBINASE_FLP"/>
    <property type="match status" value="1"/>
</dbReference>
<feature type="chain" id="PRO_0000197572" description="Recombinase Flp protein">
    <location>
        <begin position="1"/>
        <end position="490"/>
    </location>
</feature>
<feature type="domain" description="Tyr recombinase Flp-type" evidence="1">
    <location>
        <begin position="152"/>
        <end position="437"/>
    </location>
</feature>
<feature type="active site" description="O-(3'-phospho-DNA)-tyrosine intermediate" evidence="1">
    <location>
        <position position="358"/>
    </location>
</feature>
<name>FLP_ZYGRO</name>